<name>KAD_CHLT2</name>
<reference key="1">
    <citation type="journal article" date="2008" name="Genome Res.">
        <title>Chlamydia trachomatis: genome sequence analysis of lymphogranuloma venereum isolates.</title>
        <authorList>
            <person name="Thomson N.R."/>
            <person name="Holden M.T.G."/>
            <person name="Carder C."/>
            <person name="Lennard N."/>
            <person name="Lockey S.J."/>
            <person name="Marsh P."/>
            <person name="Skipp P."/>
            <person name="O'Connor C.D."/>
            <person name="Goodhead I."/>
            <person name="Norbertzcak H."/>
            <person name="Harris B."/>
            <person name="Ormond D."/>
            <person name="Rance R."/>
            <person name="Quail M.A."/>
            <person name="Parkhill J."/>
            <person name="Stephens R.S."/>
            <person name="Clarke I.N."/>
        </authorList>
    </citation>
    <scope>NUCLEOTIDE SEQUENCE [LARGE SCALE GENOMIC DNA]</scope>
    <source>
        <strain>ATCC VR-902B / DSM 19102 / 434/Bu</strain>
    </source>
</reference>
<organism>
    <name type="scientific">Chlamydia trachomatis serovar L2 (strain ATCC VR-902B / DSM 19102 / 434/Bu)</name>
    <dbReference type="NCBI Taxonomy" id="471472"/>
    <lineage>
        <taxon>Bacteria</taxon>
        <taxon>Pseudomonadati</taxon>
        <taxon>Chlamydiota</taxon>
        <taxon>Chlamydiia</taxon>
        <taxon>Chlamydiales</taxon>
        <taxon>Chlamydiaceae</taxon>
        <taxon>Chlamydia/Chlamydophila group</taxon>
        <taxon>Chlamydia</taxon>
    </lineage>
</organism>
<keyword id="KW-0067">ATP-binding</keyword>
<keyword id="KW-0963">Cytoplasm</keyword>
<keyword id="KW-0418">Kinase</keyword>
<keyword id="KW-0479">Metal-binding</keyword>
<keyword id="KW-0545">Nucleotide biosynthesis</keyword>
<keyword id="KW-0547">Nucleotide-binding</keyword>
<keyword id="KW-0808">Transferase</keyword>
<keyword id="KW-0862">Zinc</keyword>
<gene>
    <name evidence="1" type="primary">adk</name>
    <name type="ordered locus">CTL0383</name>
</gene>
<proteinExistence type="inferred from homology"/>
<comment type="function">
    <text evidence="1">Catalyzes the reversible transfer of the terminal phosphate group between ATP and AMP. Plays an important role in cellular energy homeostasis and in adenine nucleotide metabolism.</text>
</comment>
<comment type="catalytic activity">
    <reaction evidence="1">
        <text>AMP + ATP = 2 ADP</text>
        <dbReference type="Rhea" id="RHEA:12973"/>
        <dbReference type="ChEBI" id="CHEBI:30616"/>
        <dbReference type="ChEBI" id="CHEBI:456215"/>
        <dbReference type="ChEBI" id="CHEBI:456216"/>
        <dbReference type="EC" id="2.7.4.3"/>
    </reaction>
</comment>
<comment type="pathway">
    <text evidence="1">Purine metabolism; AMP biosynthesis via salvage pathway; AMP from ADP: step 1/1.</text>
</comment>
<comment type="subunit">
    <text evidence="1">Monomer.</text>
</comment>
<comment type="subcellular location">
    <subcellularLocation>
        <location evidence="1">Cytoplasm</location>
    </subcellularLocation>
</comment>
<comment type="domain">
    <text evidence="1">Consists of three domains, a large central CORE domain and two small peripheral domains, NMPbind and LID, which undergo movements during catalysis. The LID domain closes over the site of phosphoryl transfer upon ATP binding. Assembling and dissambling the active center during each catalytic cycle provides an effective means to prevent ATP hydrolysis. Some bacteria have evolved a zinc-coordinating structure that stabilizes the LID domain.</text>
</comment>
<comment type="similarity">
    <text evidence="1">Belongs to the adenylate kinase family.</text>
</comment>
<protein>
    <recommendedName>
        <fullName evidence="1">Adenylate kinase</fullName>
        <shortName evidence="1">AK</shortName>
        <ecNumber evidence="1">2.7.4.3</ecNumber>
    </recommendedName>
    <alternativeName>
        <fullName evidence="1">ATP-AMP transphosphorylase</fullName>
    </alternativeName>
    <alternativeName>
        <fullName evidence="1">ATP:AMP phosphotransferase</fullName>
    </alternativeName>
    <alternativeName>
        <fullName evidence="1">Adenylate monophosphate kinase</fullName>
    </alternativeName>
</protein>
<feature type="chain" id="PRO_1000100545" description="Adenylate kinase">
    <location>
        <begin position="1"/>
        <end position="245"/>
    </location>
</feature>
<feature type="region of interest" description="NMP" evidence="1">
    <location>
        <begin position="35"/>
        <end position="64"/>
    </location>
</feature>
<feature type="region of interest" description="LID" evidence="1">
    <location>
        <begin position="143"/>
        <end position="176"/>
    </location>
</feature>
<feature type="binding site" evidence="1">
    <location>
        <begin position="15"/>
        <end position="20"/>
    </location>
    <ligand>
        <name>ATP</name>
        <dbReference type="ChEBI" id="CHEBI:30616"/>
    </ligand>
</feature>
<feature type="binding site" evidence="1">
    <location>
        <position position="36"/>
    </location>
    <ligand>
        <name>AMP</name>
        <dbReference type="ChEBI" id="CHEBI:456215"/>
    </ligand>
</feature>
<feature type="binding site" evidence="1">
    <location>
        <position position="41"/>
    </location>
    <ligand>
        <name>AMP</name>
        <dbReference type="ChEBI" id="CHEBI:456215"/>
    </ligand>
</feature>
<feature type="binding site" evidence="1">
    <location>
        <begin position="62"/>
        <end position="64"/>
    </location>
    <ligand>
        <name>AMP</name>
        <dbReference type="ChEBI" id="CHEBI:456215"/>
    </ligand>
</feature>
<feature type="binding site" evidence="1">
    <location>
        <begin position="103"/>
        <end position="106"/>
    </location>
    <ligand>
        <name>AMP</name>
        <dbReference type="ChEBI" id="CHEBI:456215"/>
    </ligand>
</feature>
<feature type="binding site" evidence="1">
    <location>
        <position position="110"/>
    </location>
    <ligand>
        <name>AMP</name>
        <dbReference type="ChEBI" id="CHEBI:456215"/>
    </ligand>
</feature>
<feature type="binding site" evidence="1">
    <location>
        <position position="144"/>
    </location>
    <ligand>
        <name>ATP</name>
        <dbReference type="ChEBI" id="CHEBI:30616"/>
    </ligand>
</feature>
<feature type="binding site" evidence="1">
    <location>
        <position position="147"/>
    </location>
    <ligand>
        <name>Zn(2+)</name>
        <dbReference type="ChEBI" id="CHEBI:29105"/>
        <note>structural</note>
    </ligand>
</feature>
<feature type="binding site" evidence="1">
    <location>
        <position position="150"/>
    </location>
    <ligand>
        <name>Zn(2+)</name>
        <dbReference type="ChEBI" id="CHEBI:29105"/>
        <note>structural</note>
    </ligand>
</feature>
<feature type="binding site" evidence="1">
    <location>
        <begin position="153"/>
        <end position="154"/>
    </location>
    <ligand>
        <name>ATP</name>
        <dbReference type="ChEBI" id="CHEBI:30616"/>
    </ligand>
</feature>
<feature type="binding site" evidence="1">
    <location>
        <position position="163"/>
    </location>
    <ligand>
        <name>Zn(2+)</name>
        <dbReference type="ChEBI" id="CHEBI:29105"/>
        <note>structural</note>
    </ligand>
</feature>
<feature type="binding site" evidence="1">
    <location>
        <position position="166"/>
    </location>
    <ligand>
        <name>Zn(2+)</name>
        <dbReference type="ChEBI" id="CHEBI:29105"/>
        <note>structural</note>
    </ligand>
</feature>
<feature type="binding site" evidence="1">
    <location>
        <position position="173"/>
    </location>
    <ligand>
        <name>AMP</name>
        <dbReference type="ChEBI" id="CHEBI:456215"/>
    </ligand>
</feature>
<feature type="binding site" evidence="1">
    <location>
        <position position="184"/>
    </location>
    <ligand>
        <name>AMP</name>
        <dbReference type="ChEBI" id="CHEBI:456215"/>
    </ligand>
</feature>
<feature type="binding site" evidence="1">
    <location>
        <position position="212"/>
    </location>
    <ligand>
        <name>ATP</name>
        <dbReference type="ChEBI" id="CHEBI:30616"/>
    </ligand>
</feature>
<evidence type="ECO:0000255" key="1">
    <source>
        <dbReference type="HAMAP-Rule" id="MF_00235"/>
    </source>
</evidence>
<accession>B0B9N6</accession>
<sequence>MDRSPLFLIIMGAPGSGKGTQSKLLASQLSLLHISSGDLLRGAVSKDTPLSQEIKSYLDQGKLLPDTLVWKLVHEKLDEFQQDTLLRRLSFLSRSENSAILDGFPRTVTQAKLLHEFLSSYFPNYKVILLDISDEEVLNRLTSRYICPACQGIYNEQQGFSSCPKCSVELIRRSDDTLEVILDRIQTYKQETQPVLDYYTEKQKLITIDANAPTQQVFQSILDSLSASLVYQERDCCNCDCDDED</sequence>
<dbReference type="EC" id="2.7.4.3" evidence="1"/>
<dbReference type="EMBL" id="AM884176">
    <property type="protein sequence ID" value="CAP03823.1"/>
    <property type="molecule type" value="Genomic_DNA"/>
</dbReference>
<dbReference type="RefSeq" id="WP_009873579.1">
    <property type="nucleotide sequence ID" value="NC_010287.1"/>
</dbReference>
<dbReference type="RefSeq" id="YP_001654467.1">
    <property type="nucleotide sequence ID" value="NC_010287.1"/>
</dbReference>
<dbReference type="SMR" id="B0B9N6"/>
<dbReference type="KEGG" id="ctb:CTL0383"/>
<dbReference type="PATRIC" id="fig|471472.4.peg.414"/>
<dbReference type="HOGENOM" id="CLU_032354_1_2_0"/>
<dbReference type="UniPathway" id="UPA00588">
    <property type="reaction ID" value="UER00649"/>
</dbReference>
<dbReference type="Proteomes" id="UP001154402">
    <property type="component" value="Chromosome"/>
</dbReference>
<dbReference type="GO" id="GO:0005737">
    <property type="term" value="C:cytoplasm"/>
    <property type="evidence" value="ECO:0007669"/>
    <property type="project" value="UniProtKB-SubCell"/>
</dbReference>
<dbReference type="GO" id="GO:0004017">
    <property type="term" value="F:adenylate kinase activity"/>
    <property type="evidence" value="ECO:0007669"/>
    <property type="project" value="UniProtKB-UniRule"/>
</dbReference>
<dbReference type="GO" id="GO:0005524">
    <property type="term" value="F:ATP binding"/>
    <property type="evidence" value="ECO:0007669"/>
    <property type="project" value="UniProtKB-UniRule"/>
</dbReference>
<dbReference type="GO" id="GO:0046872">
    <property type="term" value="F:metal ion binding"/>
    <property type="evidence" value="ECO:0007669"/>
    <property type="project" value="UniProtKB-KW"/>
</dbReference>
<dbReference type="GO" id="GO:0044209">
    <property type="term" value="P:AMP salvage"/>
    <property type="evidence" value="ECO:0007669"/>
    <property type="project" value="UniProtKB-UniRule"/>
</dbReference>
<dbReference type="CDD" id="cd01428">
    <property type="entry name" value="ADK"/>
    <property type="match status" value="1"/>
</dbReference>
<dbReference type="Gene3D" id="3.40.50.300">
    <property type="entry name" value="P-loop containing nucleotide triphosphate hydrolases"/>
    <property type="match status" value="1"/>
</dbReference>
<dbReference type="HAMAP" id="MF_00235">
    <property type="entry name" value="Adenylate_kinase_Adk"/>
    <property type="match status" value="1"/>
</dbReference>
<dbReference type="InterPro" id="IPR006259">
    <property type="entry name" value="Adenyl_kin_sub"/>
</dbReference>
<dbReference type="InterPro" id="IPR000850">
    <property type="entry name" value="Adenylat/UMP-CMP_kin"/>
</dbReference>
<dbReference type="InterPro" id="IPR033690">
    <property type="entry name" value="Adenylat_kinase_CS"/>
</dbReference>
<dbReference type="InterPro" id="IPR027417">
    <property type="entry name" value="P-loop_NTPase"/>
</dbReference>
<dbReference type="NCBIfam" id="TIGR01351">
    <property type="entry name" value="adk"/>
    <property type="match status" value="1"/>
</dbReference>
<dbReference type="NCBIfam" id="NF001385">
    <property type="entry name" value="PRK00279.2-3"/>
    <property type="match status" value="1"/>
</dbReference>
<dbReference type="PANTHER" id="PTHR23359">
    <property type="entry name" value="NUCLEOTIDE KINASE"/>
    <property type="match status" value="1"/>
</dbReference>
<dbReference type="Pfam" id="PF00406">
    <property type="entry name" value="ADK"/>
    <property type="match status" value="1"/>
</dbReference>
<dbReference type="PRINTS" id="PR00094">
    <property type="entry name" value="ADENYLTKNASE"/>
</dbReference>
<dbReference type="SUPFAM" id="SSF52540">
    <property type="entry name" value="P-loop containing nucleoside triphosphate hydrolases"/>
    <property type="match status" value="1"/>
</dbReference>
<dbReference type="SUPFAM" id="SSF57802">
    <property type="entry name" value="Rubredoxin-like"/>
    <property type="match status" value="1"/>
</dbReference>
<dbReference type="PROSITE" id="PS00113">
    <property type="entry name" value="ADENYLATE_KINASE"/>
    <property type="match status" value="1"/>
</dbReference>